<accession>B3W7E5</accession>
<sequence length="301" mass="31991">MQKAELITAIVTPFNDRDEIDYGVMQRLVDHLIAEGTDGFVVGATTGEGPTLSHPEKITLYTRFADMVHGRALVIANSGSNNTKETAAFTHEVGGIAGIDATLVVVPYYNKPDQNGMIAHYTAVAAAAQKPIVIYNIPGRTGVDMLPATVATLAQNPMIQGIKQCGSLPALSDIIDRTKHDAFNVWTGEDAQALNIKTLGGMGVISVAAHLYAHSIREMYAALDRGDITTVAALQRQLLPKMAALFHFPSPAPTKAALNALGFQVGSPRLPLLPLNASQQQELAHLLGVPELSAIEAEVLA</sequence>
<proteinExistence type="inferred from homology"/>
<organism>
    <name type="scientific">Lacticaseibacillus casei (strain BL23)</name>
    <name type="common">Lactobacillus casei</name>
    <dbReference type="NCBI Taxonomy" id="543734"/>
    <lineage>
        <taxon>Bacteria</taxon>
        <taxon>Bacillati</taxon>
        <taxon>Bacillota</taxon>
        <taxon>Bacilli</taxon>
        <taxon>Lactobacillales</taxon>
        <taxon>Lactobacillaceae</taxon>
        <taxon>Lacticaseibacillus</taxon>
    </lineage>
</organism>
<protein>
    <recommendedName>
        <fullName evidence="1">4-hydroxy-tetrahydrodipicolinate synthase</fullName>
        <shortName evidence="1">HTPA synthase</shortName>
        <ecNumber evidence="1">4.3.3.7</ecNumber>
    </recommendedName>
</protein>
<comment type="function">
    <text evidence="1">Catalyzes the condensation of (S)-aspartate-beta-semialdehyde [(S)-ASA] and pyruvate to 4-hydroxy-tetrahydrodipicolinate (HTPA).</text>
</comment>
<comment type="catalytic activity">
    <reaction evidence="1">
        <text>L-aspartate 4-semialdehyde + pyruvate = (2S,4S)-4-hydroxy-2,3,4,5-tetrahydrodipicolinate + H2O + H(+)</text>
        <dbReference type="Rhea" id="RHEA:34171"/>
        <dbReference type="ChEBI" id="CHEBI:15361"/>
        <dbReference type="ChEBI" id="CHEBI:15377"/>
        <dbReference type="ChEBI" id="CHEBI:15378"/>
        <dbReference type="ChEBI" id="CHEBI:67139"/>
        <dbReference type="ChEBI" id="CHEBI:537519"/>
        <dbReference type="EC" id="4.3.3.7"/>
    </reaction>
</comment>
<comment type="pathway">
    <text evidence="1">Amino-acid biosynthesis; L-lysine biosynthesis via DAP pathway; (S)-tetrahydrodipicolinate from L-aspartate: step 3/4.</text>
</comment>
<comment type="subunit">
    <text evidence="1">Homotetramer; dimer of dimers.</text>
</comment>
<comment type="subcellular location">
    <subcellularLocation>
        <location evidence="1">Cytoplasm</location>
    </subcellularLocation>
</comment>
<comment type="similarity">
    <text evidence="1">Belongs to the DapA family.</text>
</comment>
<comment type="caution">
    <text evidence="2">Was originally thought to be a dihydrodipicolinate synthase (DHDPS), catalyzing the condensation of (S)-aspartate-beta-semialdehyde [(S)-ASA] and pyruvate to dihydrodipicolinate (DHDP). However, it was shown in E.coli that the product of the enzymatic reaction is not dihydrodipicolinate but in fact (4S)-4-hydroxy-2,3,4,5-tetrahydro-(2S)-dipicolinic acid (HTPA), and that the consecutive dehydration reaction leading to DHDP is not spontaneous but catalyzed by DapB.</text>
</comment>
<gene>
    <name evidence="1" type="primary">dapA</name>
    <name type="ordered locus">LCABL_00970</name>
</gene>
<feature type="chain" id="PRO_1000124044" description="4-hydroxy-tetrahydrodipicolinate synthase">
    <location>
        <begin position="1"/>
        <end position="301"/>
    </location>
</feature>
<feature type="active site" description="Proton donor/acceptor" evidence="1">
    <location>
        <position position="135"/>
    </location>
</feature>
<feature type="active site" description="Schiff-base intermediate with substrate" evidence="1">
    <location>
        <position position="163"/>
    </location>
</feature>
<feature type="binding site" evidence="1">
    <location>
        <position position="46"/>
    </location>
    <ligand>
        <name>pyruvate</name>
        <dbReference type="ChEBI" id="CHEBI:15361"/>
    </ligand>
</feature>
<feature type="binding site" evidence="1">
    <location>
        <position position="205"/>
    </location>
    <ligand>
        <name>pyruvate</name>
        <dbReference type="ChEBI" id="CHEBI:15361"/>
    </ligand>
</feature>
<feature type="site" description="Part of a proton relay during catalysis" evidence="1">
    <location>
        <position position="45"/>
    </location>
</feature>
<feature type="site" description="Part of a proton relay during catalysis" evidence="1">
    <location>
        <position position="109"/>
    </location>
</feature>
<dbReference type="EC" id="4.3.3.7" evidence="1"/>
<dbReference type="EMBL" id="FM177140">
    <property type="protein sequence ID" value="CAQ65229.1"/>
    <property type="molecule type" value="Genomic_DNA"/>
</dbReference>
<dbReference type="SMR" id="B3W7E5"/>
<dbReference type="KEGG" id="lcb:LCABL_00970"/>
<dbReference type="HOGENOM" id="CLU_049343_7_1_9"/>
<dbReference type="UniPathway" id="UPA00034">
    <property type="reaction ID" value="UER00017"/>
</dbReference>
<dbReference type="GO" id="GO:0005829">
    <property type="term" value="C:cytosol"/>
    <property type="evidence" value="ECO:0007669"/>
    <property type="project" value="TreeGrafter"/>
</dbReference>
<dbReference type="GO" id="GO:0008840">
    <property type="term" value="F:4-hydroxy-tetrahydrodipicolinate synthase activity"/>
    <property type="evidence" value="ECO:0007669"/>
    <property type="project" value="UniProtKB-UniRule"/>
</dbReference>
<dbReference type="GO" id="GO:0019877">
    <property type="term" value="P:diaminopimelate biosynthetic process"/>
    <property type="evidence" value="ECO:0007669"/>
    <property type="project" value="UniProtKB-UniRule"/>
</dbReference>
<dbReference type="GO" id="GO:0009089">
    <property type="term" value="P:lysine biosynthetic process via diaminopimelate"/>
    <property type="evidence" value="ECO:0007669"/>
    <property type="project" value="UniProtKB-UniRule"/>
</dbReference>
<dbReference type="CDD" id="cd00950">
    <property type="entry name" value="DHDPS"/>
    <property type="match status" value="1"/>
</dbReference>
<dbReference type="Gene3D" id="3.20.20.70">
    <property type="entry name" value="Aldolase class I"/>
    <property type="match status" value="1"/>
</dbReference>
<dbReference type="HAMAP" id="MF_00418">
    <property type="entry name" value="DapA"/>
    <property type="match status" value="1"/>
</dbReference>
<dbReference type="InterPro" id="IPR013785">
    <property type="entry name" value="Aldolase_TIM"/>
</dbReference>
<dbReference type="InterPro" id="IPR005263">
    <property type="entry name" value="DapA"/>
</dbReference>
<dbReference type="InterPro" id="IPR002220">
    <property type="entry name" value="DapA-like"/>
</dbReference>
<dbReference type="InterPro" id="IPR020625">
    <property type="entry name" value="Schiff_base-form_aldolases_AS"/>
</dbReference>
<dbReference type="NCBIfam" id="TIGR00674">
    <property type="entry name" value="dapA"/>
    <property type="match status" value="1"/>
</dbReference>
<dbReference type="PANTHER" id="PTHR12128:SF66">
    <property type="entry name" value="4-HYDROXY-2-OXOGLUTARATE ALDOLASE, MITOCHONDRIAL"/>
    <property type="match status" value="1"/>
</dbReference>
<dbReference type="PANTHER" id="PTHR12128">
    <property type="entry name" value="DIHYDRODIPICOLINATE SYNTHASE"/>
    <property type="match status" value="1"/>
</dbReference>
<dbReference type="Pfam" id="PF00701">
    <property type="entry name" value="DHDPS"/>
    <property type="match status" value="1"/>
</dbReference>
<dbReference type="PIRSF" id="PIRSF001365">
    <property type="entry name" value="DHDPS"/>
    <property type="match status" value="1"/>
</dbReference>
<dbReference type="PRINTS" id="PR00146">
    <property type="entry name" value="DHPICSNTHASE"/>
</dbReference>
<dbReference type="SMART" id="SM01130">
    <property type="entry name" value="DHDPS"/>
    <property type="match status" value="1"/>
</dbReference>
<dbReference type="SUPFAM" id="SSF51569">
    <property type="entry name" value="Aldolase"/>
    <property type="match status" value="1"/>
</dbReference>
<dbReference type="PROSITE" id="PS00666">
    <property type="entry name" value="DHDPS_2"/>
    <property type="match status" value="1"/>
</dbReference>
<evidence type="ECO:0000255" key="1">
    <source>
        <dbReference type="HAMAP-Rule" id="MF_00418"/>
    </source>
</evidence>
<evidence type="ECO:0000305" key="2"/>
<keyword id="KW-0028">Amino-acid biosynthesis</keyword>
<keyword id="KW-0963">Cytoplasm</keyword>
<keyword id="KW-0220">Diaminopimelate biosynthesis</keyword>
<keyword id="KW-0456">Lyase</keyword>
<keyword id="KW-0457">Lysine biosynthesis</keyword>
<keyword id="KW-0704">Schiff base</keyword>
<name>DAPA_LACCB</name>
<reference key="1">
    <citation type="submission" date="2008-06" db="EMBL/GenBank/DDBJ databases">
        <title>Lactobacillus casei BL23 complete genome sequence.</title>
        <authorList>
            <person name="Maze A."/>
            <person name="Boel G."/>
            <person name="Bourand A."/>
            <person name="Loux V."/>
            <person name="Gibrat J.F."/>
            <person name="Zuniga M."/>
            <person name="Hartke A."/>
            <person name="Deutscher J."/>
        </authorList>
    </citation>
    <scope>NUCLEOTIDE SEQUENCE [LARGE SCALE GENOMIC DNA]</scope>
    <source>
        <strain>BL23</strain>
    </source>
</reference>